<sequence>MAVQQNKKSPSKRGMHRSHDALTNPPLAIEPTTGEIHLRHHISPNGYYRGKKVIKTKNDD</sequence>
<reference key="1">
    <citation type="journal article" date="2003" name="J. Bacteriol.">
        <title>Complete genome sequence of the ammonia-oxidizing bacterium and obligate chemolithoautotroph Nitrosomonas europaea.</title>
        <authorList>
            <person name="Chain P."/>
            <person name="Lamerdin J.E."/>
            <person name="Larimer F.W."/>
            <person name="Regala W."/>
            <person name="Lao V."/>
            <person name="Land M.L."/>
            <person name="Hauser L."/>
            <person name="Hooper A.B."/>
            <person name="Klotz M.G."/>
            <person name="Norton J."/>
            <person name="Sayavedra-Soto L.A."/>
            <person name="Arciero D.M."/>
            <person name="Hommes N.G."/>
            <person name="Whittaker M.M."/>
            <person name="Arp D.J."/>
        </authorList>
    </citation>
    <scope>NUCLEOTIDE SEQUENCE [LARGE SCALE GENOMIC DNA]</scope>
    <source>
        <strain>ATCC 19718 / CIP 103999 / KCTC 2705 / NBRC 14298</strain>
    </source>
</reference>
<evidence type="ECO:0000255" key="1">
    <source>
        <dbReference type="HAMAP-Rule" id="MF_00340"/>
    </source>
</evidence>
<evidence type="ECO:0000256" key="2">
    <source>
        <dbReference type="SAM" id="MobiDB-lite"/>
    </source>
</evidence>
<evidence type="ECO:0000305" key="3"/>
<organism>
    <name type="scientific">Nitrosomonas europaea (strain ATCC 19718 / CIP 103999 / KCTC 2705 / NBRC 14298)</name>
    <dbReference type="NCBI Taxonomy" id="228410"/>
    <lineage>
        <taxon>Bacteria</taxon>
        <taxon>Pseudomonadati</taxon>
        <taxon>Pseudomonadota</taxon>
        <taxon>Betaproteobacteria</taxon>
        <taxon>Nitrosomonadales</taxon>
        <taxon>Nitrosomonadaceae</taxon>
        <taxon>Nitrosomonas</taxon>
    </lineage>
</organism>
<dbReference type="EMBL" id="AL954747">
    <property type="protein sequence ID" value="CAD85555.1"/>
    <property type="molecule type" value="Genomic_DNA"/>
</dbReference>
<dbReference type="RefSeq" id="WP_011112201.1">
    <property type="nucleotide sequence ID" value="NC_004757.1"/>
</dbReference>
<dbReference type="SMR" id="Q82U62"/>
<dbReference type="STRING" id="228410.NE1644"/>
<dbReference type="GeneID" id="87104808"/>
<dbReference type="KEGG" id="neu:NE1644"/>
<dbReference type="eggNOG" id="COG0333">
    <property type="taxonomic scope" value="Bacteria"/>
</dbReference>
<dbReference type="HOGENOM" id="CLU_129084_2_1_4"/>
<dbReference type="OrthoDB" id="9801927at2"/>
<dbReference type="PhylomeDB" id="Q82U62"/>
<dbReference type="Proteomes" id="UP000001416">
    <property type="component" value="Chromosome"/>
</dbReference>
<dbReference type="GO" id="GO:0015934">
    <property type="term" value="C:large ribosomal subunit"/>
    <property type="evidence" value="ECO:0007669"/>
    <property type="project" value="InterPro"/>
</dbReference>
<dbReference type="GO" id="GO:0003735">
    <property type="term" value="F:structural constituent of ribosome"/>
    <property type="evidence" value="ECO:0007669"/>
    <property type="project" value="InterPro"/>
</dbReference>
<dbReference type="GO" id="GO:0006412">
    <property type="term" value="P:translation"/>
    <property type="evidence" value="ECO:0007669"/>
    <property type="project" value="UniProtKB-UniRule"/>
</dbReference>
<dbReference type="HAMAP" id="MF_00340">
    <property type="entry name" value="Ribosomal_bL32"/>
    <property type="match status" value="1"/>
</dbReference>
<dbReference type="InterPro" id="IPR002677">
    <property type="entry name" value="Ribosomal_bL32"/>
</dbReference>
<dbReference type="InterPro" id="IPR044957">
    <property type="entry name" value="Ribosomal_bL32_bact"/>
</dbReference>
<dbReference type="InterPro" id="IPR011332">
    <property type="entry name" value="Ribosomal_zn-bd"/>
</dbReference>
<dbReference type="NCBIfam" id="TIGR01031">
    <property type="entry name" value="rpmF_bact"/>
    <property type="match status" value="1"/>
</dbReference>
<dbReference type="PANTHER" id="PTHR35534">
    <property type="entry name" value="50S RIBOSOMAL PROTEIN L32"/>
    <property type="match status" value="1"/>
</dbReference>
<dbReference type="PANTHER" id="PTHR35534:SF1">
    <property type="entry name" value="LARGE RIBOSOMAL SUBUNIT PROTEIN BL32"/>
    <property type="match status" value="1"/>
</dbReference>
<dbReference type="Pfam" id="PF01783">
    <property type="entry name" value="Ribosomal_L32p"/>
    <property type="match status" value="1"/>
</dbReference>
<dbReference type="SUPFAM" id="SSF57829">
    <property type="entry name" value="Zn-binding ribosomal proteins"/>
    <property type="match status" value="1"/>
</dbReference>
<gene>
    <name evidence="1" type="primary">rpmF</name>
    <name type="ordered locus">NE1644</name>
</gene>
<name>RL32_NITEU</name>
<feature type="chain" id="PRO_0000172377" description="Large ribosomal subunit protein bL32">
    <location>
        <begin position="1"/>
        <end position="60"/>
    </location>
</feature>
<feature type="region of interest" description="Disordered" evidence="2">
    <location>
        <begin position="1"/>
        <end position="43"/>
    </location>
</feature>
<accession>Q82U62</accession>
<keyword id="KW-1185">Reference proteome</keyword>
<keyword id="KW-0687">Ribonucleoprotein</keyword>
<keyword id="KW-0689">Ribosomal protein</keyword>
<protein>
    <recommendedName>
        <fullName evidence="1">Large ribosomal subunit protein bL32</fullName>
    </recommendedName>
    <alternativeName>
        <fullName evidence="3">50S ribosomal protein L32</fullName>
    </alternativeName>
</protein>
<proteinExistence type="inferred from homology"/>
<comment type="similarity">
    <text evidence="1">Belongs to the bacterial ribosomal protein bL32 family.</text>
</comment>